<name>RS4_STRCO</name>
<organism>
    <name type="scientific">Streptomyces coelicolor (strain ATCC BAA-471 / A3(2) / M145)</name>
    <dbReference type="NCBI Taxonomy" id="100226"/>
    <lineage>
        <taxon>Bacteria</taxon>
        <taxon>Bacillati</taxon>
        <taxon>Actinomycetota</taxon>
        <taxon>Actinomycetes</taxon>
        <taxon>Kitasatosporales</taxon>
        <taxon>Streptomycetaceae</taxon>
        <taxon>Streptomyces</taxon>
        <taxon>Streptomyces albidoflavus group</taxon>
    </lineage>
</organism>
<keyword id="KW-1185">Reference proteome</keyword>
<keyword id="KW-0687">Ribonucleoprotein</keyword>
<keyword id="KW-0689">Ribosomal protein</keyword>
<keyword id="KW-0694">RNA-binding</keyword>
<keyword id="KW-0699">rRNA-binding</keyword>
<accession>Q9KXP5</accession>
<comment type="function">
    <text evidence="1">One of the primary rRNA binding proteins, it binds directly to 16S rRNA where it nucleates assembly of the body of the 30S subunit.</text>
</comment>
<comment type="function">
    <text evidence="1">With S5 and S12 plays an important role in translational accuracy.</text>
</comment>
<comment type="subunit">
    <text evidence="1">Part of the 30S ribosomal subunit. Contacts protein S5. The interaction surface between S4 and S5 is involved in control of translational fidelity.</text>
</comment>
<comment type="similarity">
    <text evidence="1">Belongs to the universal ribosomal protein uS4 family.</text>
</comment>
<sequence length="204" mass="23611">MANQPRPKVKKSRALGIALTPKAVKYFEARPYPPGEHGRGRKQNSDYKVRLLEKQRLRAQYDLSERQLVRAYERASKTNMKTGEALVIELERRLDALVLRSGIARTIYQARQMVVHGHIQVNGQKVDKPSFRVRPDDVVQVRERSKEKTLFTIAREGGFAPDGETPRYLQVNLKALAFRLDREPNRKEIPVICDEQLVVEYYAR</sequence>
<gene>
    <name evidence="1" type="primary">rpsD</name>
    <name type="ordered locus">SCO1505</name>
    <name type="ORF">SC9C5.29c</name>
</gene>
<protein>
    <recommendedName>
        <fullName evidence="1">Small ribosomal subunit protein uS4</fullName>
    </recommendedName>
    <alternativeName>
        <fullName evidence="2">30S ribosomal protein S4</fullName>
    </alternativeName>
</protein>
<reference key="1">
    <citation type="journal article" date="2002" name="Nature">
        <title>Complete genome sequence of the model actinomycete Streptomyces coelicolor A3(2).</title>
        <authorList>
            <person name="Bentley S.D."/>
            <person name="Chater K.F."/>
            <person name="Cerdeno-Tarraga A.-M."/>
            <person name="Challis G.L."/>
            <person name="Thomson N.R."/>
            <person name="James K.D."/>
            <person name="Harris D.E."/>
            <person name="Quail M.A."/>
            <person name="Kieser H."/>
            <person name="Harper D."/>
            <person name="Bateman A."/>
            <person name="Brown S."/>
            <person name="Chandra G."/>
            <person name="Chen C.W."/>
            <person name="Collins M."/>
            <person name="Cronin A."/>
            <person name="Fraser A."/>
            <person name="Goble A."/>
            <person name="Hidalgo J."/>
            <person name="Hornsby T."/>
            <person name="Howarth S."/>
            <person name="Huang C.-H."/>
            <person name="Kieser T."/>
            <person name="Larke L."/>
            <person name="Murphy L.D."/>
            <person name="Oliver K."/>
            <person name="O'Neil S."/>
            <person name="Rabbinowitsch E."/>
            <person name="Rajandream M.A."/>
            <person name="Rutherford K.M."/>
            <person name="Rutter S."/>
            <person name="Seeger K."/>
            <person name="Saunders D."/>
            <person name="Sharp S."/>
            <person name="Squares R."/>
            <person name="Squares S."/>
            <person name="Taylor K."/>
            <person name="Warren T."/>
            <person name="Wietzorrek A."/>
            <person name="Woodward J.R."/>
            <person name="Barrell B.G."/>
            <person name="Parkhill J."/>
            <person name="Hopwood D.A."/>
        </authorList>
    </citation>
    <scope>NUCLEOTIDE SEQUENCE [LARGE SCALE GENOMIC DNA]</scope>
    <source>
        <strain>ATCC BAA-471 / A3(2) / M145</strain>
    </source>
</reference>
<evidence type="ECO:0000255" key="1">
    <source>
        <dbReference type="HAMAP-Rule" id="MF_01306"/>
    </source>
</evidence>
<evidence type="ECO:0000305" key="2"/>
<feature type="chain" id="PRO_0000132469" description="Small ribosomal subunit protein uS4">
    <location>
        <begin position="1"/>
        <end position="204"/>
    </location>
</feature>
<feature type="domain" description="S4 RNA-binding" evidence="1">
    <location>
        <begin position="92"/>
        <end position="153"/>
    </location>
</feature>
<dbReference type="EMBL" id="AL939109">
    <property type="protein sequence ID" value="CAB93385.1"/>
    <property type="molecule type" value="Genomic_DNA"/>
</dbReference>
<dbReference type="RefSeq" id="NP_625785.1">
    <property type="nucleotide sequence ID" value="NC_003888.3"/>
</dbReference>
<dbReference type="RefSeq" id="WP_003977321.1">
    <property type="nucleotide sequence ID" value="NZ_VNID01000021.1"/>
</dbReference>
<dbReference type="SMR" id="Q9KXP5"/>
<dbReference type="FunCoup" id="Q9KXP5">
    <property type="interactions" value="277"/>
</dbReference>
<dbReference type="STRING" id="100226.gene:17759091"/>
<dbReference type="PaxDb" id="100226-SCO1505"/>
<dbReference type="GeneID" id="96651645"/>
<dbReference type="KEGG" id="sco:SCO1505"/>
<dbReference type="PATRIC" id="fig|100226.15.peg.1514"/>
<dbReference type="eggNOG" id="COG0522">
    <property type="taxonomic scope" value="Bacteria"/>
</dbReference>
<dbReference type="HOGENOM" id="CLU_092403_0_3_11"/>
<dbReference type="InParanoid" id="Q9KXP5"/>
<dbReference type="OrthoDB" id="9803672at2"/>
<dbReference type="PhylomeDB" id="Q9KXP5"/>
<dbReference type="Proteomes" id="UP000001973">
    <property type="component" value="Chromosome"/>
</dbReference>
<dbReference type="GO" id="GO:0015935">
    <property type="term" value="C:small ribosomal subunit"/>
    <property type="evidence" value="ECO:0000318"/>
    <property type="project" value="GO_Central"/>
</dbReference>
<dbReference type="GO" id="GO:0019843">
    <property type="term" value="F:rRNA binding"/>
    <property type="evidence" value="ECO:0000318"/>
    <property type="project" value="GO_Central"/>
</dbReference>
<dbReference type="GO" id="GO:0003735">
    <property type="term" value="F:structural constituent of ribosome"/>
    <property type="evidence" value="ECO:0000318"/>
    <property type="project" value="GO_Central"/>
</dbReference>
<dbReference type="GO" id="GO:0042274">
    <property type="term" value="P:ribosomal small subunit biogenesis"/>
    <property type="evidence" value="ECO:0000318"/>
    <property type="project" value="GO_Central"/>
</dbReference>
<dbReference type="GO" id="GO:0006412">
    <property type="term" value="P:translation"/>
    <property type="evidence" value="ECO:0007669"/>
    <property type="project" value="UniProtKB-UniRule"/>
</dbReference>
<dbReference type="CDD" id="cd00165">
    <property type="entry name" value="S4"/>
    <property type="match status" value="1"/>
</dbReference>
<dbReference type="FunFam" id="3.10.290.10:FF:000001">
    <property type="entry name" value="30S ribosomal protein S4"/>
    <property type="match status" value="1"/>
</dbReference>
<dbReference type="Gene3D" id="1.10.1050.10">
    <property type="entry name" value="Ribosomal Protein S4 Delta 41, Chain A, domain 1"/>
    <property type="match status" value="1"/>
</dbReference>
<dbReference type="Gene3D" id="3.10.290.10">
    <property type="entry name" value="RNA-binding S4 domain"/>
    <property type="match status" value="1"/>
</dbReference>
<dbReference type="HAMAP" id="MF_01306_B">
    <property type="entry name" value="Ribosomal_uS4_B"/>
    <property type="match status" value="1"/>
</dbReference>
<dbReference type="InterPro" id="IPR022801">
    <property type="entry name" value="Ribosomal_uS4"/>
</dbReference>
<dbReference type="InterPro" id="IPR005709">
    <property type="entry name" value="Ribosomal_uS4_bac-type"/>
</dbReference>
<dbReference type="InterPro" id="IPR018079">
    <property type="entry name" value="Ribosomal_uS4_CS"/>
</dbReference>
<dbReference type="InterPro" id="IPR001912">
    <property type="entry name" value="Ribosomal_uS4_N"/>
</dbReference>
<dbReference type="InterPro" id="IPR002942">
    <property type="entry name" value="S4_RNA-bd"/>
</dbReference>
<dbReference type="InterPro" id="IPR036986">
    <property type="entry name" value="S4_RNA-bd_sf"/>
</dbReference>
<dbReference type="NCBIfam" id="NF003717">
    <property type="entry name" value="PRK05327.1"/>
    <property type="match status" value="1"/>
</dbReference>
<dbReference type="NCBIfam" id="TIGR01017">
    <property type="entry name" value="rpsD_bact"/>
    <property type="match status" value="1"/>
</dbReference>
<dbReference type="PANTHER" id="PTHR11831">
    <property type="entry name" value="30S 40S RIBOSOMAL PROTEIN"/>
    <property type="match status" value="1"/>
</dbReference>
<dbReference type="PANTHER" id="PTHR11831:SF4">
    <property type="entry name" value="SMALL RIBOSOMAL SUBUNIT PROTEIN US4M"/>
    <property type="match status" value="1"/>
</dbReference>
<dbReference type="Pfam" id="PF00163">
    <property type="entry name" value="Ribosomal_S4"/>
    <property type="match status" value="1"/>
</dbReference>
<dbReference type="Pfam" id="PF01479">
    <property type="entry name" value="S4"/>
    <property type="match status" value="1"/>
</dbReference>
<dbReference type="SMART" id="SM01390">
    <property type="entry name" value="Ribosomal_S4"/>
    <property type="match status" value="1"/>
</dbReference>
<dbReference type="SMART" id="SM00363">
    <property type="entry name" value="S4"/>
    <property type="match status" value="1"/>
</dbReference>
<dbReference type="SUPFAM" id="SSF55174">
    <property type="entry name" value="Alpha-L RNA-binding motif"/>
    <property type="match status" value="1"/>
</dbReference>
<dbReference type="PROSITE" id="PS00632">
    <property type="entry name" value="RIBOSOMAL_S4"/>
    <property type="match status" value="1"/>
</dbReference>
<dbReference type="PROSITE" id="PS50889">
    <property type="entry name" value="S4"/>
    <property type="match status" value="1"/>
</dbReference>
<proteinExistence type="inferred from homology"/>